<proteinExistence type="evidence at transcript level"/>
<feature type="chain" id="PRO_0000249564" description="Kinetochore protein Spc25">
    <location>
        <begin position="1"/>
        <end position="226"/>
    </location>
</feature>
<feature type="region of interest" description="Interaction with the N-terminus of SPBC24" evidence="1">
    <location>
        <begin position="1"/>
        <end position="146"/>
    </location>
</feature>
<feature type="region of interest" description="Interaction with the NDC80-NUF2 subcomplex" evidence="1">
    <location>
        <begin position="1"/>
        <end position="58"/>
    </location>
</feature>
<feature type="region of interest" description="Interaction with the C-terminus of SPBC24" evidence="1">
    <location>
        <begin position="147"/>
        <end position="226"/>
    </location>
</feature>
<feature type="coiled-coil region" evidence="3">
    <location>
        <begin position="72"/>
        <end position="147"/>
    </location>
</feature>
<feature type="modified residue" description="Phosphoserine" evidence="2">
    <location>
        <position position="12"/>
    </location>
</feature>
<dbReference type="EMBL" id="BC103246">
    <property type="protein sequence ID" value="AAI03247.1"/>
    <property type="molecule type" value="mRNA"/>
</dbReference>
<dbReference type="RefSeq" id="NP_001029402.1">
    <property type="nucleotide sequence ID" value="NM_001034230.2"/>
</dbReference>
<dbReference type="RefSeq" id="XP_005202372.1">
    <property type="nucleotide sequence ID" value="XM_005202315.5"/>
</dbReference>
<dbReference type="SMR" id="Q3ZBK3"/>
<dbReference type="FunCoup" id="Q3ZBK3">
    <property type="interactions" value="896"/>
</dbReference>
<dbReference type="STRING" id="9913.ENSBTAP00000057478"/>
<dbReference type="PaxDb" id="9913-ENSBTAP00000013248"/>
<dbReference type="GeneID" id="505011"/>
<dbReference type="KEGG" id="bta:505011"/>
<dbReference type="CTD" id="57405"/>
<dbReference type="VEuPathDB" id="HostDB:ENSBTAG00000010048"/>
<dbReference type="eggNOG" id="KOG4657">
    <property type="taxonomic scope" value="Eukaryota"/>
</dbReference>
<dbReference type="HOGENOM" id="CLU_102420_0_0_1"/>
<dbReference type="InParanoid" id="Q3ZBK3"/>
<dbReference type="OMA" id="KNINEFW"/>
<dbReference type="OrthoDB" id="6353017at2759"/>
<dbReference type="TreeFam" id="TF332941"/>
<dbReference type="Reactome" id="R-BTA-141444">
    <property type="pathway name" value="Amplification of signal from unattached kinetochores via a MAD2 inhibitory signal"/>
</dbReference>
<dbReference type="Reactome" id="R-BTA-2467813">
    <property type="pathway name" value="Separation of Sister Chromatids"/>
</dbReference>
<dbReference type="Reactome" id="R-BTA-2500257">
    <property type="pathway name" value="Resolution of Sister Chromatid Cohesion"/>
</dbReference>
<dbReference type="Reactome" id="R-BTA-5663220">
    <property type="pathway name" value="RHO GTPases Activate Formins"/>
</dbReference>
<dbReference type="Reactome" id="R-BTA-68877">
    <property type="pathway name" value="Mitotic Prometaphase"/>
</dbReference>
<dbReference type="Reactome" id="R-BTA-9648025">
    <property type="pathway name" value="EML4 and NUDC in mitotic spindle formation"/>
</dbReference>
<dbReference type="Proteomes" id="UP000009136">
    <property type="component" value="Chromosome 2"/>
</dbReference>
<dbReference type="Bgee" id="ENSBTAG00000010048">
    <property type="expression patterns" value="Expressed in oocyte and 95 other cell types or tissues"/>
</dbReference>
<dbReference type="GO" id="GO:0005829">
    <property type="term" value="C:cytosol"/>
    <property type="evidence" value="ECO:0007669"/>
    <property type="project" value="Ensembl"/>
</dbReference>
<dbReference type="GO" id="GO:0000776">
    <property type="term" value="C:kinetochore"/>
    <property type="evidence" value="ECO:0000250"/>
    <property type="project" value="UniProtKB"/>
</dbReference>
<dbReference type="GO" id="GO:0031262">
    <property type="term" value="C:Ndc80 complex"/>
    <property type="evidence" value="ECO:0000250"/>
    <property type="project" value="UniProtKB"/>
</dbReference>
<dbReference type="GO" id="GO:0005634">
    <property type="term" value="C:nucleus"/>
    <property type="evidence" value="ECO:0007669"/>
    <property type="project" value="UniProtKB-SubCell"/>
</dbReference>
<dbReference type="GO" id="GO:0008608">
    <property type="term" value="P:attachment of spindle microtubules to kinetochore"/>
    <property type="evidence" value="ECO:0007669"/>
    <property type="project" value="Ensembl"/>
</dbReference>
<dbReference type="GO" id="GO:0051301">
    <property type="term" value="P:cell division"/>
    <property type="evidence" value="ECO:0007669"/>
    <property type="project" value="UniProtKB-KW"/>
</dbReference>
<dbReference type="GO" id="GO:0007059">
    <property type="term" value="P:chromosome segregation"/>
    <property type="evidence" value="ECO:0000250"/>
    <property type="project" value="UniProtKB"/>
</dbReference>
<dbReference type="GO" id="GO:0007052">
    <property type="term" value="P:mitotic spindle organization"/>
    <property type="evidence" value="ECO:0000250"/>
    <property type="project" value="UniProtKB"/>
</dbReference>
<dbReference type="CDD" id="cd23784">
    <property type="entry name" value="RWD_Spc25"/>
    <property type="match status" value="1"/>
</dbReference>
<dbReference type="Gene3D" id="6.10.250.1950">
    <property type="match status" value="1"/>
</dbReference>
<dbReference type="InterPro" id="IPR045143">
    <property type="entry name" value="Spc25"/>
</dbReference>
<dbReference type="InterPro" id="IPR013255">
    <property type="entry name" value="Spc25_C"/>
</dbReference>
<dbReference type="PANTHER" id="PTHR14281:SF0">
    <property type="entry name" value="KINETOCHORE PROTEIN SPC25"/>
    <property type="match status" value="1"/>
</dbReference>
<dbReference type="PANTHER" id="PTHR14281">
    <property type="entry name" value="KINETOCHORE PROTEIN SPC25-RELATED"/>
    <property type="match status" value="1"/>
</dbReference>
<dbReference type="Pfam" id="PF08234">
    <property type="entry name" value="Spindle_Spc25"/>
    <property type="match status" value="1"/>
</dbReference>
<comment type="function">
    <text evidence="2">Acts as a component of the essential kinetochore-associated NDC80 complex, which is required for chromosome segregation and spindle checkpoint activity. Required for kinetochore integrity and the organization of stable microtubule binding sites in the outer plate of the kinetochore. The NDC80 complex synergistically enhances the affinity of the SKA1 complex for microtubules and may allow the NDC80 complex to track depolymerizing microtubules.</text>
</comment>
<comment type="subunit">
    <text evidence="1">Component of the NDC80 complex, which consists of NDC80/HEC1, CDCA1, SPBC24 and SPBC25. The NDC80 complex is formed by two subcomplexes composed of NDC80/HEC1-CDCA1 and SPBC24-SPBC25. Each subcomplex is formed by parallel interactions through the coiled-coil domains of individual subunits. Formation of a tetrameric complex is mediated by interactions between the C-terminal regions of both subunits of the NDC80/HEC1-CDCA1 subcomplex and the N-terminal regions of both subunits of the SPBC24-SPBC25 complex. The tetrameric NDC80 complex has an elongated rod-like structure with globular domains at either end (By similarity).</text>
</comment>
<comment type="subcellular location">
    <subcellularLocation>
        <location evidence="2">Nucleus</location>
    </subcellularLocation>
    <subcellularLocation>
        <location evidence="2">Chromosome</location>
        <location evidence="2">Centromere</location>
        <location evidence="2">Kinetochore</location>
    </subcellularLocation>
    <text evidence="2">Localizes to kinetochores from late prophase to anaphase. Localizes specifically to the outer plate of the kinetochore.</text>
</comment>
<comment type="similarity">
    <text evidence="4">Belongs to the SPC25 family.</text>
</comment>
<protein>
    <recommendedName>
        <fullName>Kinetochore protein Spc25</fullName>
    </recommendedName>
</protein>
<keyword id="KW-0131">Cell cycle</keyword>
<keyword id="KW-0132">Cell division</keyword>
<keyword id="KW-0137">Centromere</keyword>
<keyword id="KW-0158">Chromosome</keyword>
<keyword id="KW-0175">Coiled coil</keyword>
<keyword id="KW-0995">Kinetochore</keyword>
<keyword id="KW-0498">Mitosis</keyword>
<keyword id="KW-0539">Nucleus</keyword>
<keyword id="KW-0597">Phosphoprotein</keyword>
<keyword id="KW-1185">Reference proteome</keyword>
<sequence>MVEDELALFDKSINEFWNKFKSTVSDTSCQMVGLRETYKDSIKAFAEKLSVKLKEEERMVEMFLEYQNQICRQNKLIQEKKENLLKLIAEVKDKKQEVEALTANIQDLKEEYARKKETISTANKANEERLKRLQKSADLYKDRLGLEIRKIYGDKLQFIFTDIDPKHPDRPFMFSLCLNEARDYEVSDCAPRLECLAEFQEKVRQTNNFSAFLANVRKAFTALVYN</sequence>
<accession>Q3ZBK3</accession>
<evidence type="ECO:0000250" key="1"/>
<evidence type="ECO:0000250" key="2">
    <source>
        <dbReference type="UniProtKB" id="Q9HBM1"/>
    </source>
</evidence>
<evidence type="ECO:0000255" key="3"/>
<evidence type="ECO:0000305" key="4"/>
<name>SPC25_BOVIN</name>
<reference key="1">
    <citation type="submission" date="2005-08" db="EMBL/GenBank/DDBJ databases">
        <authorList>
            <consortium name="NIH - Mammalian Gene Collection (MGC) project"/>
        </authorList>
    </citation>
    <scope>NUCLEOTIDE SEQUENCE [LARGE SCALE MRNA]</scope>
    <source>
        <strain>Hereford</strain>
        <tissue>Thymus</tissue>
    </source>
</reference>
<gene>
    <name type="primary">SPC25</name>
    <name type="synonym">SPBC25</name>
</gene>
<organism>
    <name type="scientific">Bos taurus</name>
    <name type="common">Bovine</name>
    <dbReference type="NCBI Taxonomy" id="9913"/>
    <lineage>
        <taxon>Eukaryota</taxon>
        <taxon>Metazoa</taxon>
        <taxon>Chordata</taxon>
        <taxon>Craniata</taxon>
        <taxon>Vertebrata</taxon>
        <taxon>Euteleostomi</taxon>
        <taxon>Mammalia</taxon>
        <taxon>Eutheria</taxon>
        <taxon>Laurasiatheria</taxon>
        <taxon>Artiodactyla</taxon>
        <taxon>Ruminantia</taxon>
        <taxon>Pecora</taxon>
        <taxon>Bovidae</taxon>
        <taxon>Bovinae</taxon>
        <taxon>Bos</taxon>
    </lineage>
</organism>